<gene>
    <name evidence="7" type="primary">tlh1</name>
    <name type="ORF">SPAC212.11</name>
</gene>
<evidence type="ECO:0000255" key="1">
    <source>
        <dbReference type="PROSITE-ProRule" id="PRU00047"/>
    </source>
</evidence>
<evidence type="ECO:0000255" key="2">
    <source>
        <dbReference type="PROSITE-ProRule" id="PRU00541"/>
    </source>
</evidence>
<evidence type="ECO:0000255" key="3">
    <source>
        <dbReference type="PROSITE-ProRule" id="PRU00542"/>
    </source>
</evidence>
<evidence type="ECO:0000256" key="4">
    <source>
        <dbReference type="SAM" id="MobiDB-lite"/>
    </source>
</evidence>
<evidence type="ECO:0000269" key="5">
    <source>
    </source>
</evidence>
<evidence type="ECO:0000303" key="6">
    <source>
    </source>
</evidence>
<evidence type="ECO:0000303" key="7">
    <source>
    </source>
</evidence>
<evidence type="ECO:0000305" key="8"/>
<evidence type="ECO:0000305" key="9">
    <source>
    </source>
</evidence>
<feature type="chain" id="PRO_0000255584" description="ATP-dependent DNA helicase tlh1">
    <location>
        <begin position="1"/>
        <end position="1887"/>
    </location>
</feature>
<feature type="domain" description="Helicase ATP-binding" evidence="2">
    <location>
        <begin position="1200"/>
        <end position="1375"/>
    </location>
</feature>
<feature type="domain" description="Helicase C-terminal" evidence="3">
    <location>
        <begin position="1401"/>
        <end position="1559"/>
    </location>
</feature>
<feature type="zinc finger region" description="CCHC-type" evidence="1">
    <location>
        <begin position="1804"/>
        <end position="1821"/>
    </location>
</feature>
<feature type="region of interest" description="Disordered" evidence="4">
    <location>
        <begin position="329"/>
        <end position="372"/>
    </location>
</feature>
<feature type="region of interest" description="Disordered" evidence="4">
    <location>
        <begin position="504"/>
        <end position="552"/>
    </location>
</feature>
<feature type="region of interest" description="Disordered" evidence="4">
    <location>
        <begin position="1110"/>
        <end position="1135"/>
    </location>
</feature>
<feature type="region of interest" description="Disordered" evidence="4">
    <location>
        <begin position="1613"/>
        <end position="1643"/>
    </location>
</feature>
<feature type="short sequence motif" description="DEAH box">
    <location>
        <begin position="1322"/>
        <end position="1325"/>
    </location>
</feature>
<feature type="compositionally biased region" description="Basic and acidic residues" evidence="4">
    <location>
        <begin position="329"/>
        <end position="347"/>
    </location>
</feature>
<feature type="compositionally biased region" description="Acidic residues" evidence="4">
    <location>
        <begin position="360"/>
        <end position="372"/>
    </location>
</feature>
<feature type="compositionally biased region" description="Acidic residues" evidence="4">
    <location>
        <begin position="524"/>
        <end position="533"/>
    </location>
</feature>
<feature type="compositionally biased region" description="Low complexity" evidence="4">
    <location>
        <begin position="540"/>
        <end position="549"/>
    </location>
</feature>
<feature type="compositionally biased region" description="Basic and acidic residues" evidence="4">
    <location>
        <begin position="1112"/>
        <end position="1131"/>
    </location>
</feature>
<feature type="compositionally biased region" description="Low complexity" evidence="4">
    <location>
        <begin position="1626"/>
        <end position="1642"/>
    </location>
</feature>
<feature type="binding site" evidence="2">
    <location>
        <begin position="1213"/>
        <end position="1220"/>
    </location>
    <ligand>
        <name>ATP</name>
        <dbReference type="ChEBI" id="CHEBI:30616"/>
    </ligand>
</feature>
<feature type="binding site" evidence="2">
    <location>
        <begin position="1240"/>
        <end position="1247"/>
    </location>
    <ligand>
        <name>ATP</name>
        <dbReference type="ChEBI" id="CHEBI:30616"/>
    </ligand>
</feature>
<feature type="non-terminal residue">
    <location>
        <position position="1887"/>
    </location>
</feature>
<name>TLH1_SCHPO</name>
<comment type="function">
    <text evidence="5 9">A probable ATP-dependent 3'-5' DNA helicase (Probable) (PubMed:15591066). Has a role in telomerase-independent telomere maintenance (PubMed:15591066).</text>
</comment>
<comment type="catalytic activity">
    <reaction evidence="9">
        <text>Couples ATP hydrolysis with the unwinding of duplex DNA by translocating in the 3'-5' direction.</text>
        <dbReference type="EC" id="5.6.2.4"/>
    </reaction>
</comment>
<comment type="catalytic activity">
    <reaction>
        <text>ATP + H2O = ADP + phosphate + H(+)</text>
        <dbReference type="Rhea" id="RHEA:13065"/>
        <dbReference type="ChEBI" id="CHEBI:15377"/>
        <dbReference type="ChEBI" id="CHEBI:15378"/>
        <dbReference type="ChEBI" id="CHEBI:30616"/>
        <dbReference type="ChEBI" id="CHEBI:43474"/>
        <dbReference type="ChEBI" id="CHEBI:456216"/>
    </reaction>
</comment>
<comment type="similarity">
    <text evidence="8">Belongs to the helicase family. RecQ subfamily.</text>
</comment>
<comment type="caution">
    <text evidence="6 8">The annotated sequence does not include a stop codon, because it is at the end of an incomplete sub-telomeric contig of the genomic sequence. RACE data suggests an additional 32 residues at the C-terminus, consistent with the SPBCPT2R1.08c annotation.</text>
</comment>
<sequence length="1887" mass="215812">MVVASEIAKVASKTARDIAGCFTCQCGTQFDNVERIVQHFKECRYRDETCKDDDIVVYEPSSFVQDEKKDKPIIVEAASEATSEEACNSSKERQLPALSALSALSTLTTSANDDLWTARLIWQSTNDTKLDNSPSSNYTDLNHKLANYGLSILSIHALMCVECECLLNVIHTAQHMQIVHKLELNEDLLWFQELRTLKLKSPTNVLQTHSSQTHVYPYIRGLPVLLNGYECVPCTKNGTGFVHAIMDTFRHHVRRTHGKVIKLENCIRRTALQTVKNKYAQRCQFFKVDYVPLNGGEEEEEEEGEEKEDAQNIKERMVDFCFSKFMEKNQQRREQQDKGENKKRQDDVDQATDNNTNTILEDDEKDNDEEEEEEIVNAREKNLLNQQFNWTAIVKKLGENWDQLVRFEYTNGIVTLDTIVNQLIRYYYRGFRHLSGMTMGMRRMFTQGGSYSAQERGLCRLEQKDTVVRYAQSAALYLIFLLRRPSADSGIRRHLEAMCGATVERKEGGSNSSSNISNVANFDSAEDDNDNDNDNDRDSNNNNNNNNTNTDDDDKLAYLELHEALKLAFLQQYDFSKNVQDLEIMEFLACMSLHKDGTSKYAYEISACFAPLIYTCRLVAACELQRLIDEKQIDLLSIPSFQTAGSIAYAHVFCFITLGQRNLYDVLYETQKVVRDIIRTEGYANTLQGLSPSTVLFQPRSNSMYPCIGDAFNNMVRLDLSELTALYEGMFAKVQDLLKELCFDMNVEKLLPISLLRSIGDDINNSKLGYSFFKESIEIRSSHSVLLRTILKNSELCHRFFPSMSKKDLTKLFGGVSDQQRNECDNYSNHYNDNSNDNDNDVFLKLHWSKSAIKKYETKASIFNELLFCLVYISAGQPARAQEMVYWTLRNGKYKTRELYLMFGRLMIYSRYDKTRNMKFAEKPIPRFLSEPLSILALRYYVLVRPLEALMKYVTTADRSKVAVYLDFMFVIAGERLQRDLPYRIFPKATYQCIQKPLGFRNYRHIAHYFKEKNIEEEMTRESYFDLQAGHTRNTALYIYGRTMDNLHYLPSDYFANFFRASYKWQELLQIRDNPTHGLLVETKHPFIKRVDQLEEALNEKLARLVGEQMVEGDKEKDKTNEEKNKDEVKAEMTQPVVNQDSHDLQDQLATTPTAPTAFHYRPGLLQPSQTSVQHCCWALSQYYGLEAKFRSLKQFQSVYFSLLNRMNLITVLPTGGGKSLSFLIPALIEKKRQTPGKVMNMVTLVLVPMMSLRQDMMLRVNEKGLLVCSGNWTAFKDVRLTLETQLPDLFILTYESALTNSGLRFFESLATLGRLARVVIDEAHLLLTSGAWRTALSRASRLSGLYAPLHLLSATFPRQLEMVARQTFCTNFYVLRETSTARENIFYFLHPYDNTEFLLDLRTLMKRTKVFEGDGRAIIFCRTKKDVEYIHRRLHQSDLFAHTHVTIYTGDVSDEERQMNFDAFRNANGKTRIMIATKAFGLGINYMGVRLVVHYGLPASSMDYVQETGRAGRDGKYAIAALFYEKYDSTWSSYVEDSMKNFLNDNTMCVRSFLASEMDGECVCCASFANCVYCSRCSDSLLGEESTVSTMYGVKPTLPETPKPAIATHSRYNASFSSSPPPQPGNSSGMSAMNTNTTSTTPVSLSELSEITLFPSSVSPTWKKSFGNANTNLKYGLEDMSLSHRRGHKRTYDEHLNNVQQGVNHDMNRVHGSVGGMSGIVGIGIGIGDGDGDGDVDSRTIHFAEYKSRVQAVKKQWVDSTDISAQLERFFRVYKDECLSCTLGNPDTEIRAHTGKACPVRLSTCYKCGKADHNLRECKLRIRFQGLCLFCGLTKFEHADSDMAYTSDCRSWARKANLISLVYYAWNNVQYRRTIADKFLQGDVRD</sequence>
<accession>P0CT33</accession>
<accession>Q5EAK4</accession>
<accession>Q9HGP6</accession>
<organism>
    <name type="scientific">Schizosaccharomyces pombe (strain 972 / ATCC 24843)</name>
    <name type="common">Fission yeast</name>
    <dbReference type="NCBI Taxonomy" id="284812"/>
    <lineage>
        <taxon>Eukaryota</taxon>
        <taxon>Fungi</taxon>
        <taxon>Dikarya</taxon>
        <taxon>Ascomycota</taxon>
        <taxon>Taphrinomycotina</taxon>
        <taxon>Schizosaccharomycetes</taxon>
        <taxon>Schizosaccharomycetales</taxon>
        <taxon>Schizosaccharomycetaceae</taxon>
        <taxon>Schizosaccharomyces</taxon>
    </lineage>
</organism>
<protein>
    <recommendedName>
        <fullName>ATP-dependent DNA helicase tlh1</fullName>
        <ecNumber evidence="9">5.6.2.4</ecNumber>
    </recommendedName>
    <alternativeName>
        <fullName evidence="8">DNA 3'-5' helicase tlh1</fullName>
    </alternativeName>
    <alternativeName>
        <fullName>Sub-telomeric helicase RecQ homolog 1</fullName>
    </alternativeName>
    <alternativeName>
        <fullName evidence="7">Telomere-linked helicase 1</fullName>
    </alternativeName>
</protein>
<keyword id="KW-0067">ATP-binding</keyword>
<keyword id="KW-0238">DNA-binding</keyword>
<keyword id="KW-0347">Helicase</keyword>
<keyword id="KW-0378">Hydrolase</keyword>
<keyword id="KW-0413">Isomerase</keyword>
<keyword id="KW-0479">Metal-binding</keyword>
<keyword id="KW-0547">Nucleotide-binding</keyword>
<keyword id="KW-1185">Reference proteome</keyword>
<keyword id="KW-0862">Zinc</keyword>
<keyword id="KW-0863">Zinc-finger</keyword>
<proteinExistence type="inferred from homology"/>
<dbReference type="EC" id="5.6.2.4" evidence="9"/>
<dbReference type="EMBL" id="CU329670">
    <property type="protein sequence ID" value="CAC05745.1"/>
    <property type="molecule type" value="Genomic_DNA"/>
</dbReference>
<dbReference type="RefSeq" id="NP_595040.1">
    <property type="nucleotide sequence ID" value="NM_001018168.1"/>
</dbReference>
<dbReference type="SMR" id="P0CT33"/>
<dbReference type="BioGRID" id="278420">
    <property type="interactions" value="2"/>
</dbReference>
<dbReference type="FunCoup" id="P0CT33">
    <property type="interactions" value="138"/>
</dbReference>
<dbReference type="STRING" id="284812.P0CT33"/>
<dbReference type="iPTMnet" id="P0CT33"/>
<dbReference type="PaxDb" id="4896-SPAC212.11.1"/>
<dbReference type="EnsemblFungi" id="SPAC212.11.1">
    <property type="protein sequence ID" value="SPAC212.11.1:pep"/>
    <property type="gene ID" value="SPAC212.11"/>
</dbReference>
<dbReference type="GeneID" id="2541932"/>
<dbReference type="KEGG" id="spo:2541932"/>
<dbReference type="PomBase" id="SPAC212.11">
    <property type="gene designation" value="tlh1"/>
</dbReference>
<dbReference type="VEuPathDB" id="FungiDB:SPAC212.11"/>
<dbReference type="HOGENOM" id="CLU_235408_0_0_1"/>
<dbReference type="InParanoid" id="P0CT33"/>
<dbReference type="Proteomes" id="UP000002485">
    <property type="component" value="Chromosome I"/>
</dbReference>
<dbReference type="ExpressionAtlas" id="P0CT33">
    <property type="expression patterns" value="differential"/>
</dbReference>
<dbReference type="GO" id="GO:0005694">
    <property type="term" value="C:chromosome"/>
    <property type="evidence" value="ECO:0000318"/>
    <property type="project" value="GO_Central"/>
</dbReference>
<dbReference type="GO" id="GO:0140445">
    <property type="term" value="C:chromosome, telomeric repeat region"/>
    <property type="evidence" value="ECO:0000314"/>
    <property type="project" value="PomBase"/>
</dbReference>
<dbReference type="GO" id="GO:0005737">
    <property type="term" value="C:cytoplasm"/>
    <property type="evidence" value="ECO:0000318"/>
    <property type="project" value="GO_Central"/>
</dbReference>
<dbReference type="GO" id="GO:0005634">
    <property type="term" value="C:nucleus"/>
    <property type="evidence" value="ECO:0000318"/>
    <property type="project" value="GO_Central"/>
</dbReference>
<dbReference type="GO" id="GO:0043138">
    <property type="term" value="F:3'-5' DNA helicase activity"/>
    <property type="evidence" value="ECO:0000318"/>
    <property type="project" value="GO_Central"/>
</dbReference>
<dbReference type="GO" id="GO:0005524">
    <property type="term" value="F:ATP binding"/>
    <property type="evidence" value="ECO:0007669"/>
    <property type="project" value="UniProtKB-KW"/>
</dbReference>
<dbReference type="GO" id="GO:0016887">
    <property type="term" value="F:ATP hydrolysis activity"/>
    <property type="evidence" value="ECO:0007669"/>
    <property type="project" value="RHEA"/>
</dbReference>
<dbReference type="GO" id="GO:0003677">
    <property type="term" value="F:DNA binding"/>
    <property type="evidence" value="ECO:0007669"/>
    <property type="project" value="UniProtKB-KW"/>
</dbReference>
<dbReference type="GO" id="GO:0008270">
    <property type="term" value="F:zinc ion binding"/>
    <property type="evidence" value="ECO:0007669"/>
    <property type="project" value="UniProtKB-KW"/>
</dbReference>
<dbReference type="GO" id="GO:0006310">
    <property type="term" value="P:DNA recombination"/>
    <property type="evidence" value="ECO:0000318"/>
    <property type="project" value="GO_Central"/>
</dbReference>
<dbReference type="GO" id="GO:0006281">
    <property type="term" value="P:DNA repair"/>
    <property type="evidence" value="ECO:0000318"/>
    <property type="project" value="GO_Central"/>
</dbReference>
<dbReference type="GO" id="GO:0000722">
    <property type="term" value="P:telomere maintenance via recombination"/>
    <property type="evidence" value="ECO:0000270"/>
    <property type="project" value="PomBase"/>
</dbReference>
<dbReference type="Gene3D" id="3.40.50.300">
    <property type="entry name" value="P-loop containing nucleotide triphosphate hydrolases"/>
    <property type="match status" value="2"/>
</dbReference>
<dbReference type="InterPro" id="IPR011545">
    <property type="entry name" value="DEAD/DEAH_box_helicase_dom"/>
</dbReference>
<dbReference type="InterPro" id="IPR014001">
    <property type="entry name" value="Helicase_ATP-bd"/>
</dbReference>
<dbReference type="InterPro" id="IPR001650">
    <property type="entry name" value="Helicase_C-like"/>
</dbReference>
<dbReference type="InterPro" id="IPR027417">
    <property type="entry name" value="P-loop_NTPase"/>
</dbReference>
<dbReference type="InterPro" id="IPR001878">
    <property type="entry name" value="Znf_CCHC"/>
</dbReference>
<dbReference type="PANTHER" id="PTHR13710:SF149">
    <property type="entry name" value="ATP-DEPENDENT DNA HELICASE TLH2"/>
    <property type="match status" value="1"/>
</dbReference>
<dbReference type="PANTHER" id="PTHR13710">
    <property type="entry name" value="DNA HELICASE RECQ FAMILY MEMBER"/>
    <property type="match status" value="1"/>
</dbReference>
<dbReference type="Pfam" id="PF00270">
    <property type="entry name" value="DEAD"/>
    <property type="match status" value="1"/>
</dbReference>
<dbReference type="Pfam" id="PF00271">
    <property type="entry name" value="Helicase_C"/>
    <property type="match status" value="1"/>
</dbReference>
<dbReference type="SMART" id="SM00487">
    <property type="entry name" value="DEXDc"/>
    <property type="match status" value="1"/>
</dbReference>
<dbReference type="SMART" id="SM00490">
    <property type="entry name" value="HELICc"/>
    <property type="match status" value="1"/>
</dbReference>
<dbReference type="SUPFAM" id="SSF52540">
    <property type="entry name" value="P-loop containing nucleoside triphosphate hydrolases"/>
    <property type="match status" value="1"/>
</dbReference>
<dbReference type="PROSITE" id="PS51192">
    <property type="entry name" value="HELICASE_ATP_BIND_1"/>
    <property type="match status" value="1"/>
</dbReference>
<dbReference type="PROSITE" id="PS51194">
    <property type="entry name" value="HELICASE_CTER"/>
    <property type="match status" value="1"/>
</dbReference>
<dbReference type="PROSITE" id="PS50158">
    <property type="entry name" value="ZF_CCHC"/>
    <property type="match status" value="1"/>
</dbReference>
<reference key="1">
    <citation type="journal article" date="2002" name="Nature">
        <title>The genome sequence of Schizosaccharomyces pombe.</title>
        <authorList>
            <person name="Wood V."/>
            <person name="Gwilliam R."/>
            <person name="Rajandream M.A."/>
            <person name="Lyne M.H."/>
            <person name="Lyne R."/>
            <person name="Stewart A."/>
            <person name="Sgouros J.G."/>
            <person name="Peat N."/>
            <person name="Hayles J."/>
            <person name="Baker S.G."/>
            <person name="Basham D."/>
            <person name="Bowman S."/>
            <person name="Brooks K."/>
            <person name="Brown D."/>
            <person name="Brown S."/>
            <person name="Chillingworth T."/>
            <person name="Churcher C.M."/>
            <person name="Collins M."/>
            <person name="Connor R."/>
            <person name="Cronin A."/>
            <person name="Davis P."/>
            <person name="Feltwell T."/>
            <person name="Fraser A."/>
            <person name="Gentles S."/>
            <person name="Goble A."/>
            <person name="Hamlin N."/>
            <person name="Harris D.E."/>
            <person name="Hidalgo J."/>
            <person name="Hodgson G."/>
            <person name="Holroyd S."/>
            <person name="Hornsby T."/>
            <person name="Howarth S."/>
            <person name="Huckle E.J."/>
            <person name="Hunt S."/>
            <person name="Jagels K."/>
            <person name="James K.D."/>
            <person name="Jones L."/>
            <person name="Jones M."/>
            <person name="Leather S."/>
            <person name="McDonald S."/>
            <person name="McLean J."/>
            <person name="Mooney P."/>
            <person name="Moule S."/>
            <person name="Mungall K.L."/>
            <person name="Murphy L.D."/>
            <person name="Niblett D."/>
            <person name="Odell C."/>
            <person name="Oliver K."/>
            <person name="O'Neil S."/>
            <person name="Pearson D."/>
            <person name="Quail M.A."/>
            <person name="Rabbinowitsch E."/>
            <person name="Rutherford K.M."/>
            <person name="Rutter S."/>
            <person name="Saunders D."/>
            <person name="Seeger K."/>
            <person name="Sharp S."/>
            <person name="Skelton J."/>
            <person name="Simmonds M.N."/>
            <person name="Squares R."/>
            <person name="Squares S."/>
            <person name="Stevens K."/>
            <person name="Taylor K."/>
            <person name="Taylor R.G."/>
            <person name="Tivey A."/>
            <person name="Walsh S.V."/>
            <person name="Warren T."/>
            <person name="Whitehead S."/>
            <person name="Woodward J.R."/>
            <person name="Volckaert G."/>
            <person name="Aert R."/>
            <person name="Robben J."/>
            <person name="Grymonprez B."/>
            <person name="Weltjens I."/>
            <person name="Vanstreels E."/>
            <person name="Rieger M."/>
            <person name="Schaefer M."/>
            <person name="Mueller-Auer S."/>
            <person name="Gabel C."/>
            <person name="Fuchs M."/>
            <person name="Duesterhoeft A."/>
            <person name="Fritzc C."/>
            <person name="Holzer E."/>
            <person name="Moestl D."/>
            <person name="Hilbert H."/>
            <person name="Borzym K."/>
            <person name="Langer I."/>
            <person name="Beck A."/>
            <person name="Lehrach H."/>
            <person name="Reinhardt R."/>
            <person name="Pohl T.M."/>
            <person name="Eger P."/>
            <person name="Zimmermann W."/>
            <person name="Wedler H."/>
            <person name="Wambutt R."/>
            <person name="Purnelle B."/>
            <person name="Goffeau A."/>
            <person name="Cadieu E."/>
            <person name="Dreano S."/>
            <person name="Gloux S."/>
            <person name="Lelaure V."/>
            <person name="Mottier S."/>
            <person name="Galibert F."/>
            <person name="Aves S.J."/>
            <person name="Xiang Z."/>
            <person name="Hunt C."/>
            <person name="Moore K."/>
            <person name="Hurst S.M."/>
            <person name="Lucas M."/>
            <person name="Rochet M."/>
            <person name="Gaillardin C."/>
            <person name="Tallada V.A."/>
            <person name="Garzon A."/>
            <person name="Thode G."/>
            <person name="Daga R.R."/>
            <person name="Cruzado L."/>
            <person name="Jimenez J."/>
            <person name="Sanchez M."/>
            <person name="del Rey F."/>
            <person name="Benito J."/>
            <person name="Dominguez A."/>
            <person name="Revuelta J.L."/>
            <person name="Moreno S."/>
            <person name="Armstrong J."/>
            <person name="Forsburg S.L."/>
            <person name="Cerutti L."/>
            <person name="Lowe T."/>
            <person name="McCombie W.R."/>
            <person name="Paulsen I."/>
            <person name="Potashkin J."/>
            <person name="Shpakovski G.V."/>
            <person name="Ussery D."/>
            <person name="Barrell B.G."/>
            <person name="Nurse P."/>
        </authorList>
    </citation>
    <scope>NUCLEOTIDE SEQUENCE [LARGE SCALE GENOMIC DNA]</scope>
    <source>
        <strain>972 / ATCC 24843</strain>
    </source>
</reference>
<reference key="2">
    <citation type="journal article" date="2005" name="J. Biol. Chem.">
        <title>Expression of a RecQ helicase homolog affects progression through crisis in fission yeast lacking telomerase.</title>
        <authorList>
            <person name="Mandell J.G."/>
            <person name="Goodrich K.J."/>
            <person name="Bahler J."/>
            <person name="Cech T.R."/>
        </authorList>
    </citation>
    <scope>FUNCTION</scope>
    <source>
        <strain>H1</strain>
    </source>
</reference>
<reference key="3">
    <citation type="journal article" date="2006" name="Nucleic Acids Res.">
        <title>Evolutionary-conserved telomere-linked helicase genes of fission yeast are repressed by silencing factors, RNAi components and the telomere-binding protein Taz1.</title>
        <authorList>
            <person name="Hansen K.R."/>
            <person name="Ibarra P.T."/>
            <person name="Thon G."/>
        </authorList>
    </citation>
    <scope>NOMENCLATURE</scope>
</reference>